<accession>Q2NRE3</accession>
<evidence type="ECO:0000255" key="1">
    <source>
        <dbReference type="HAMAP-Rule" id="MF_02012"/>
    </source>
</evidence>
<dbReference type="EMBL" id="AP008232">
    <property type="protein sequence ID" value="BAE75282.1"/>
    <property type="molecule type" value="Genomic_DNA"/>
</dbReference>
<dbReference type="RefSeq" id="WP_011411737.1">
    <property type="nucleotide sequence ID" value="NC_007712.1"/>
</dbReference>
<dbReference type="SMR" id="Q2NRE3"/>
<dbReference type="STRING" id="343509.SG2007"/>
<dbReference type="KEGG" id="sgl:SG2007"/>
<dbReference type="eggNOG" id="COG3027">
    <property type="taxonomic scope" value="Bacteria"/>
</dbReference>
<dbReference type="HOGENOM" id="CLU_116623_3_0_6"/>
<dbReference type="OrthoDB" id="5917174at2"/>
<dbReference type="BioCyc" id="SGLO343509:SGP1_RS18395-MONOMER"/>
<dbReference type="Proteomes" id="UP000001932">
    <property type="component" value="Chromosome"/>
</dbReference>
<dbReference type="GO" id="GO:0032153">
    <property type="term" value="C:cell division site"/>
    <property type="evidence" value="ECO:0007669"/>
    <property type="project" value="TreeGrafter"/>
</dbReference>
<dbReference type="GO" id="GO:0030428">
    <property type="term" value="C:cell septum"/>
    <property type="evidence" value="ECO:0007669"/>
    <property type="project" value="TreeGrafter"/>
</dbReference>
<dbReference type="GO" id="GO:0005829">
    <property type="term" value="C:cytosol"/>
    <property type="evidence" value="ECO:0007669"/>
    <property type="project" value="TreeGrafter"/>
</dbReference>
<dbReference type="GO" id="GO:0005886">
    <property type="term" value="C:plasma membrane"/>
    <property type="evidence" value="ECO:0007669"/>
    <property type="project" value="UniProtKB-UniRule"/>
</dbReference>
<dbReference type="GO" id="GO:0000917">
    <property type="term" value="P:division septum assembly"/>
    <property type="evidence" value="ECO:0007669"/>
    <property type="project" value="UniProtKB-KW"/>
</dbReference>
<dbReference type="GO" id="GO:0043093">
    <property type="term" value="P:FtsZ-dependent cytokinesis"/>
    <property type="evidence" value="ECO:0007669"/>
    <property type="project" value="TreeGrafter"/>
</dbReference>
<dbReference type="GO" id="GO:0000921">
    <property type="term" value="P:septin ring assembly"/>
    <property type="evidence" value="ECO:0007669"/>
    <property type="project" value="TreeGrafter"/>
</dbReference>
<dbReference type="FunFam" id="1.20.5.50:FF:000001">
    <property type="entry name" value="Cell division protein ZapA"/>
    <property type="match status" value="1"/>
</dbReference>
<dbReference type="FunFam" id="3.30.160.880:FF:000001">
    <property type="entry name" value="Cell division protein ZapA"/>
    <property type="match status" value="1"/>
</dbReference>
<dbReference type="Gene3D" id="1.20.5.50">
    <property type="match status" value="1"/>
</dbReference>
<dbReference type="Gene3D" id="3.30.160.880">
    <property type="entry name" value="Cell division protein ZapA protomer, N-terminal domain"/>
    <property type="match status" value="1"/>
</dbReference>
<dbReference type="HAMAP" id="MF_02012">
    <property type="entry name" value="ZapA_type1"/>
    <property type="match status" value="1"/>
</dbReference>
<dbReference type="InterPro" id="IPR007838">
    <property type="entry name" value="Cell_div_ZapA-like"/>
</dbReference>
<dbReference type="InterPro" id="IPR036192">
    <property type="entry name" value="Cell_div_ZapA-like_sf"/>
</dbReference>
<dbReference type="InterPro" id="IPR023771">
    <property type="entry name" value="Cell_div_ZapA_eubact"/>
</dbReference>
<dbReference type="InterPro" id="IPR042233">
    <property type="entry name" value="Cell_div_ZapA_N"/>
</dbReference>
<dbReference type="NCBIfam" id="NF008209">
    <property type="entry name" value="PRK10972.1"/>
    <property type="match status" value="1"/>
</dbReference>
<dbReference type="PANTHER" id="PTHR34981">
    <property type="entry name" value="CELL DIVISION PROTEIN ZAPA"/>
    <property type="match status" value="1"/>
</dbReference>
<dbReference type="PANTHER" id="PTHR34981:SF1">
    <property type="entry name" value="CELL DIVISION PROTEIN ZAPA"/>
    <property type="match status" value="1"/>
</dbReference>
<dbReference type="Pfam" id="PF05164">
    <property type="entry name" value="ZapA"/>
    <property type="match status" value="1"/>
</dbReference>
<dbReference type="SUPFAM" id="SSF102829">
    <property type="entry name" value="Cell division protein ZapA-like"/>
    <property type="match status" value="1"/>
</dbReference>
<name>ZAPA_SODGM</name>
<gene>
    <name evidence="1" type="primary">zapA</name>
    <name type="ordered locus">SG2007</name>
</gene>
<organism>
    <name type="scientific">Sodalis glossinidius (strain morsitans)</name>
    <dbReference type="NCBI Taxonomy" id="343509"/>
    <lineage>
        <taxon>Bacteria</taxon>
        <taxon>Pseudomonadati</taxon>
        <taxon>Pseudomonadota</taxon>
        <taxon>Gammaproteobacteria</taxon>
        <taxon>Enterobacterales</taxon>
        <taxon>Bruguierivoracaceae</taxon>
        <taxon>Sodalis</taxon>
    </lineage>
</organism>
<reference key="1">
    <citation type="journal article" date="2006" name="Genome Res.">
        <title>Massive genome erosion and functional adaptations provide insights into the symbiotic lifestyle of Sodalis glossinidius in the tsetse host.</title>
        <authorList>
            <person name="Toh H."/>
            <person name="Weiss B.L."/>
            <person name="Perkin S.A.H."/>
            <person name="Yamashita A."/>
            <person name="Oshima K."/>
            <person name="Hattori M."/>
            <person name="Aksoy S."/>
        </authorList>
    </citation>
    <scope>NUCLEOTIDE SEQUENCE [LARGE SCALE GENOMIC DNA]</scope>
    <source>
        <strain>morsitans</strain>
    </source>
</reference>
<comment type="function">
    <text evidence="1">Activator of cell division through the inhibition of FtsZ GTPase activity, therefore promoting FtsZ assembly into bundles of protofilaments necessary for the formation of the division Z ring. It is recruited early at mid-cell but it is not essential for cell division.</text>
</comment>
<comment type="subunit">
    <text evidence="1">Homodimer. Interacts with FtsZ.</text>
</comment>
<comment type="subcellular location">
    <subcellularLocation>
        <location evidence="1">Cytoplasm</location>
    </subcellularLocation>
    <text evidence="1">Localizes at mid-cell.</text>
</comment>
<comment type="similarity">
    <text evidence="1">Belongs to the ZapA family. Type 1 subfamily.</text>
</comment>
<sequence>MSAQPVDIQIFGRTLRVNCPPEQQEALNQAAEDLNQRLQNLKVRTRVTNTEQLVFIAALNVCHELAQERLKTRDYAANMEQRIRLLQQTIEQALVEQGRITERPGNQFE</sequence>
<keyword id="KW-0131">Cell cycle</keyword>
<keyword id="KW-0132">Cell division</keyword>
<keyword id="KW-0175">Coiled coil</keyword>
<keyword id="KW-0963">Cytoplasm</keyword>
<keyword id="KW-0717">Septation</keyword>
<proteinExistence type="inferred from homology"/>
<feature type="chain" id="PRO_0000345664" description="Cell division protein ZapA">
    <location>
        <begin position="1"/>
        <end position="109"/>
    </location>
</feature>
<feature type="coiled-coil region" evidence="1">
    <location>
        <begin position="21"/>
        <end position="97"/>
    </location>
</feature>
<protein>
    <recommendedName>
        <fullName evidence="1">Cell division protein ZapA</fullName>
    </recommendedName>
    <alternativeName>
        <fullName evidence="1">Z ring-associated protein ZapA</fullName>
    </alternativeName>
</protein>